<keyword id="KW-0227">DNA damage</keyword>
<keyword id="KW-0234">DNA repair</keyword>
<keyword id="KW-0378">Hydrolase</keyword>
<name>3MGH_BACMK</name>
<protein>
    <recommendedName>
        <fullName evidence="1">Putative 3-methyladenine DNA glycosylase</fullName>
        <ecNumber evidence="1">3.2.2.-</ecNumber>
    </recommendedName>
</protein>
<proteinExistence type="inferred from homology"/>
<reference key="1">
    <citation type="journal article" date="2008" name="Chem. Biol. Interact.">
        <title>Extending the Bacillus cereus group genomics to putative food-borne pathogens of different toxicity.</title>
        <authorList>
            <person name="Lapidus A."/>
            <person name="Goltsman E."/>
            <person name="Auger S."/>
            <person name="Galleron N."/>
            <person name="Segurens B."/>
            <person name="Dossat C."/>
            <person name="Land M.L."/>
            <person name="Broussolle V."/>
            <person name="Brillard J."/>
            <person name="Guinebretiere M.-H."/>
            <person name="Sanchis V."/>
            <person name="Nguen-the C."/>
            <person name="Lereclus D."/>
            <person name="Richardson P."/>
            <person name="Wincker P."/>
            <person name="Weissenbach J."/>
            <person name="Ehrlich S.D."/>
            <person name="Sorokin A."/>
        </authorList>
    </citation>
    <scope>NUCLEOTIDE SEQUENCE [LARGE SCALE GENOMIC DNA]</scope>
    <source>
        <strain>KBAB4</strain>
    </source>
</reference>
<sequence length="204" mass="22872">MQAPPSFYEGDTLVVAKKLLGHKLVHIVDGIKRSGFIVEVEAYKGPDDKAAHSYGGRRTDRTEVMFGAPGHAYVYLIYGMYHCFNVITAPIGTPQGVLIRALEPVDGIEDMKLARYNKTDITKAQYKNLTNGPGKLCRALGITLEERGVSLQSDTLHIELVPEEDHLSSTHNIIAGPRINIDYAEEAVHYPWRFYYEKHPFVSK</sequence>
<gene>
    <name type="ordered locus">BcerKBAB4_0774</name>
</gene>
<comment type="similarity">
    <text evidence="1">Belongs to the DNA glycosylase MPG family.</text>
</comment>
<evidence type="ECO:0000255" key="1">
    <source>
        <dbReference type="HAMAP-Rule" id="MF_00527"/>
    </source>
</evidence>
<dbReference type="EC" id="3.2.2.-" evidence="1"/>
<dbReference type="EMBL" id="CP000903">
    <property type="protein sequence ID" value="ABY42034.1"/>
    <property type="molecule type" value="Genomic_DNA"/>
</dbReference>
<dbReference type="RefSeq" id="WP_012260391.1">
    <property type="nucleotide sequence ID" value="NC_010184.1"/>
</dbReference>
<dbReference type="SMR" id="A9VGI8"/>
<dbReference type="KEGG" id="bwe:BcerKBAB4_0774"/>
<dbReference type="eggNOG" id="COG2094">
    <property type="taxonomic scope" value="Bacteria"/>
</dbReference>
<dbReference type="HOGENOM" id="CLU_060471_0_2_9"/>
<dbReference type="Proteomes" id="UP000002154">
    <property type="component" value="Chromosome"/>
</dbReference>
<dbReference type="GO" id="GO:0003905">
    <property type="term" value="F:alkylbase DNA N-glycosylase activity"/>
    <property type="evidence" value="ECO:0007669"/>
    <property type="project" value="InterPro"/>
</dbReference>
<dbReference type="GO" id="GO:0003677">
    <property type="term" value="F:DNA binding"/>
    <property type="evidence" value="ECO:0007669"/>
    <property type="project" value="InterPro"/>
</dbReference>
<dbReference type="GO" id="GO:0006284">
    <property type="term" value="P:base-excision repair"/>
    <property type="evidence" value="ECO:0007669"/>
    <property type="project" value="InterPro"/>
</dbReference>
<dbReference type="CDD" id="cd00540">
    <property type="entry name" value="AAG"/>
    <property type="match status" value="1"/>
</dbReference>
<dbReference type="FunFam" id="3.10.300.10:FF:000001">
    <property type="entry name" value="Putative 3-methyladenine DNA glycosylase"/>
    <property type="match status" value="1"/>
</dbReference>
<dbReference type="Gene3D" id="3.10.300.10">
    <property type="entry name" value="Methylpurine-DNA glycosylase (MPG)"/>
    <property type="match status" value="1"/>
</dbReference>
<dbReference type="HAMAP" id="MF_00527">
    <property type="entry name" value="3MGH"/>
    <property type="match status" value="1"/>
</dbReference>
<dbReference type="InterPro" id="IPR011034">
    <property type="entry name" value="Formyl_transferase-like_C_sf"/>
</dbReference>
<dbReference type="InterPro" id="IPR003180">
    <property type="entry name" value="MPG"/>
</dbReference>
<dbReference type="InterPro" id="IPR036995">
    <property type="entry name" value="MPG_sf"/>
</dbReference>
<dbReference type="NCBIfam" id="TIGR00567">
    <property type="entry name" value="3mg"/>
    <property type="match status" value="1"/>
</dbReference>
<dbReference type="NCBIfam" id="NF002001">
    <property type="entry name" value="PRK00802.1-1"/>
    <property type="match status" value="1"/>
</dbReference>
<dbReference type="NCBIfam" id="NF002003">
    <property type="entry name" value="PRK00802.1-3"/>
    <property type="match status" value="1"/>
</dbReference>
<dbReference type="PANTHER" id="PTHR10429">
    <property type="entry name" value="DNA-3-METHYLADENINE GLYCOSYLASE"/>
    <property type="match status" value="1"/>
</dbReference>
<dbReference type="PANTHER" id="PTHR10429:SF0">
    <property type="entry name" value="DNA-3-METHYLADENINE GLYCOSYLASE"/>
    <property type="match status" value="1"/>
</dbReference>
<dbReference type="Pfam" id="PF02245">
    <property type="entry name" value="Pur_DNA_glyco"/>
    <property type="match status" value="1"/>
</dbReference>
<dbReference type="SUPFAM" id="SSF50486">
    <property type="entry name" value="FMT C-terminal domain-like"/>
    <property type="match status" value="1"/>
</dbReference>
<accession>A9VGI8</accession>
<organism>
    <name type="scientific">Bacillus mycoides (strain KBAB4)</name>
    <name type="common">Bacillus weihenstephanensis</name>
    <dbReference type="NCBI Taxonomy" id="315730"/>
    <lineage>
        <taxon>Bacteria</taxon>
        <taxon>Bacillati</taxon>
        <taxon>Bacillota</taxon>
        <taxon>Bacilli</taxon>
        <taxon>Bacillales</taxon>
        <taxon>Bacillaceae</taxon>
        <taxon>Bacillus</taxon>
        <taxon>Bacillus cereus group</taxon>
    </lineage>
</organism>
<feature type="chain" id="PRO_1000127749" description="Putative 3-methyladenine DNA glycosylase">
    <location>
        <begin position="1"/>
        <end position="204"/>
    </location>
</feature>